<comment type="function">
    <text evidence="1">Hydrolyzes ribosome-free peptidyl-tRNAs (with 1 or more amino acids incorporated), which drop off the ribosome during protein synthesis, or as a result of ribosome stalling.</text>
</comment>
<comment type="function">
    <text evidence="1">Catalyzes the release of premature peptidyl moieties from peptidyl-tRNA molecules trapped in stalled 50S ribosomal subunits, and thus maintains levels of free tRNAs and 50S ribosomes.</text>
</comment>
<comment type="catalytic activity">
    <reaction evidence="1">
        <text>an N-acyl-L-alpha-aminoacyl-tRNA + H2O = an N-acyl-L-amino acid + a tRNA + H(+)</text>
        <dbReference type="Rhea" id="RHEA:54448"/>
        <dbReference type="Rhea" id="RHEA-COMP:10123"/>
        <dbReference type="Rhea" id="RHEA-COMP:13883"/>
        <dbReference type="ChEBI" id="CHEBI:15377"/>
        <dbReference type="ChEBI" id="CHEBI:15378"/>
        <dbReference type="ChEBI" id="CHEBI:59874"/>
        <dbReference type="ChEBI" id="CHEBI:78442"/>
        <dbReference type="ChEBI" id="CHEBI:138191"/>
        <dbReference type="EC" id="3.1.1.29"/>
    </reaction>
</comment>
<comment type="subunit">
    <text evidence="1">Monomer.</text>
</comment>
<comment type="subcellular location">
    <subcellularLocation>
        <location evidence="1">Cytoplasm</location>
    </subcellularLocation>
</comment>
<comment type="similarity">
    <text evidence="1">Belongs to the PTH family.</text>
</comment>
<comment type="sequence caution" evidence="2">
    <conflict type="erroneous initiation">
        <sequence resource="EMBL-CDS" id="CAG37461"/>
    </conflict>
    <text>Extended N-terminus.</text>
</comment>
<accession>Q6AJL9</accession>
<reference key="1">
    <citation type="journal article" date="2004" name="Environ. Microbiol.">
        <title>The genome of Desulfotalea psychrophila, a sulfate-reducing bacterium from permanently cold Arctic sediments.</title>
        <authorList>
            <person name="Rabus R."/>
            <person name="Ruepp A."/>
            <person name="Frickey T."/>
            <person name="Rattei T."/>
            <person name="Fartmann B."/>
            <person name="Stark M."/>
            <person name="Bauer M."/>
            <person name="Zibat A."/>
            <person name="Lombardot T."/>
            <person name="Becker I."/>
            <person name="Amann J."/>
            <person name="Gellner K."/>
            <person name="Teeling H."/>
            <person name="Leuschner W.D."/>
            <person name="Gloeckner F.-O."/>
            <person name="Lupas A.N."/>
            <person name="Amann R."/>
            <person name="Klenk H.-P."/>
        </authorList>
    </citation>
    <scope>NUCLEOTIDE SEQUENCE [LARGE SCALE GENOMIC DNA]</scope>
    <source>
        <strain>DSM 12343 / LSv54</strain>
    </source>
</reference>
<keyword id="KW-0963">Cytoplasm</keyword>
<keyword id="KW-0378">Hydrolase</keyword>
<keyword id="KW-1185">Reference proteome</keyword>
<keyword id="KW-0694">RNA-binding</keyword>
<keyword id="KW-0820">tRNA-binding</keyword>
<gene>
    <name evidence="1" type="primary">pth</name>
    <name type="ordered locus">DP2732</name>
</gene>
<dbReference type="EC" id="3.1.1.29" evidence="1"/>
<dbReference type="EMBL" id="CR522870">
    <property type="protein sequence ID" value="CAG37461.1"/>
    <property type="status" value="ALT_INIT"/>
    <property type="molecule type" value="Genomic_DNA"/>
</dbReference>
<dbReference type="RefSeq" id="WP_049785110.1">
    <property type="nucleotide sequence ID" value="NC_006138.1"/>
</dbReference>
<dbReference type="SMR" id="Q6AJL9"/>
<dbReference type="STRING" id="177439.DP2732"/>
<dbReference type="KEGG" id="dps:DP2732"/>
<dbReference type="eggNOG" id="COG0193">
    <property type="taxonomic scope" value="Bacteria"/>
</dbReference>
<dbReference type="HOGENOM" id="CLU_062456_4_1_7"/>
<dbReference type="OrthoDB" id="9800507at2"/>
<dbReference type="Proteomes" id="UP000000602">
    <property type="component" value="Chromosome"/>
</dbReference>
<dbReference type="GO" id="GO:0005737">
    <property type="term" value="C:cytoplasm"/>
    <property type="evidence" value="ECO:0007669"/>
    <property type="project" value="UniProtKB-SubCell"/>
</dbReference>
<dbReference type="GO" id="GO:0004045">
    <property type="term" value="F:peptidyl-tRNA hydrolase activity"/>
    <property type="evidence" value="ECO:0007669"/>
    <property type="project" value="UniProtKB-UniRule"/>
</dbReference>
<dbReference type="GO" id="GO:0000049">
    <property type="term" value="F:tRNA binding"/>
    <property type="evidence" value="ECO:0007669"/>
    <property type="project" value="UniProtKB-UniRule"/>
</dbReference>
<dbReference type="GO" id="GO:0006515">
    <property type="term" value="P:protein quality control for misfolded or incompletely synthesized proteins"/>
    <property type="evidence" value="ECO:0007669"/>
    <property type="project" value="UniProtKB-UniRule"/>
</dbReference>
<dbReference type="GO" id="GO:0072344">
    <property type="term" value="P:rescue of stalled ribosome"/>
    <property type="evidence" value="ECO:0007669"/>
    <property type="project" value="UniProtKB-UniRule"/>
</dbReference>
<dbReference type="CDD" id="cd00462">
    <property type="entry name" value="PTH"/>
    <property type="match status" value="1"/>
</dbReference>
<dbReference type="Gene3D" id="3.40.50.1470">
    <property type="entry name" value="Peptidyl-tRNA hydrolase"/>
    <property type="match status" value="1"/>
</dbReference>
<dbReference type="HAMAP" id="MF_00083">
    <property type="entry name" value="Pept_tRNA_hydro_bact"/>
    <property type="match status" value="1"/>
</dbReference>
<dbReference type="InterPro" id="IPR001328">
    <property type="entry name" value="Pept_tRNA_hydro"/>
</dbReference>
<dbReference type="InterPro" id="IPR018171">
    <property type="entry name" value="Pept_tRNA_hydro_CS"/>
</dbReference>
<dbReference type="InterPro" id="IPR036416">
    <property type="entry name" value="Pept_tRNA_hydro_sf"/>
</dbReference>
<dbReference type="NCBIfam" id="TIGR00447">
    <property type="entry name" value="pth"/>
    <property type="match status" value="1"/>
</dbReference>
<dbReference type="PANTHER" id="PTHR17224">
    <property type="entry name" value="PEPTIDYL-TRNA HYDROLASE"/>
    <property type="match status" value="1"/>
</dbReference>
<dbReference type="PANTHER" id="PTHR17224:SF1">
    <property type="entry name" value="PEPTIDYL-TRNA HYDROLASE"/>
    <property type="match status" value="1"/>
</dbReference>
<dbReference type="Pfam" id="PF01195">
    <property type="entry name" value="Pept_tRNA_hydro"/>
    <property type="match status" value="1"/>
</dbReference>
<dbReference type="SUPFAM" id="SSF53178">
    <property type="entry name" value="Peptidyl-tRNA hydrolase-like"/>
    <property type="match status" value="1"/>
</dbReference>
<dbReference type="PROSITE" id="PS01195">
    <property type="entry name" value="PEPT_TRNA_HYDROL_1"/>
    <property type="match status" value="1"/>
</dbReference>
<dbReference type="PROSITE" id="PS01196">
    <property type="entry name" value="PEPT_TRNA_HYDROL_2"/>
    <property type="match status" value="1"/>
</dbReference>
<name>PTH_DESPS</name>
<organism>
    <name type="scientific">Desulfotalea psychrophila (strain LSv54 / DSM 12343)</name>
    <dbReference type="NCBI Taxonomy" id="177439"/>
    <lineage>
        <taxon>Bacteria</taxon>
        <taxon>Pseudomonadati</taxon>
        <taxon>Thermodesulfobacteriota</taxon>
        <taxon>Desulfobulbia</taxon>
        <taxon>Desulfobulbales</taxon>
        <taxon>Desulfocapsaceae</taxon>
        <taxon>Desulfotalea</taxon>
    </lineage>
</organism>
<sequence length="197" mass="21408">MGVNEYLLVGLGNPGREYQDTRHNAGSLLLDDLSSRWSGSNSIEKYNSTFRKARVAGNSLALMQPLTYMNRSGLAVAEYVRFFKIVAENIIVIHDDIDMAPGRVKLVRGGGAGGHNGIKSINSSLGFVDYYRLKIGVGRPGKHGIHPEIPVDKYVLAPFSAEQLDIIVGRYDAIAAGLETFFRDSPAAAATVLNSLR</sequence>
<evidence type="ECO:0000255" key="1">
    <source>
        <dbReference type="HAMAP-Rule" id="MF_00083"/>
    </source>
</evidence>
<evidence type="ECO:0000305" key="2"/>
<proteinExistence type="inferred from homology"/>
<feature type="chain" id="PRO_0000187731" description="Peptidyl-tRNA hydrolase">
    <location>
        <begin position="1"/>
        <end position="197"/>
    </location>
</feature>
<feature type="active site" description="Proton acceptor" evidence="1">
    <location>
        <position position="23"/>
    </location>
</feature>
<feature type="binding site" evidence="1">
    <location>
        <position position="18"/>
    </location>
    <ligand>
        <name>tRNA</name>
        <dbReference type="ChEBI" id="CHEBI:17843"/>
    </ligand>
</feature>
<feature type="binding site" evidence="1">
    <location>
        <position position="68"/>
    </location>
    <ligand>
        <name>tRNA</name>
        <dbReference type="ChEBI" id="CHEBI:17843"/>
    </ligand>
</feature>
<feature type="binding site" evidence="1">
    <location>
        <position position="70"/>
    </location>
    <ligand>
        <name>tRNA</name>
        <dbReference type="ChEBI" id="CHEBI:17843"/>
    </ligand>
</feature>
<feature type="binding site" evidence="1">
    <location>
        <position position="116"/>
    </location>
    <ligand>
        <name>tRNA</name>
        <dbReference type="ChEBI" id="CHEBI:17843"/>
    </ligand>
</feature>
<feature type="site" description="Discriminates between blocked and unblocked aminoacyl-tRNA" evidence="1">
    <location>
        <position position="13"/>
    </location>
</feature>
<feature type="site" description="Stabilizes the basic form of H active site to accept a proton" evidence="1">
    <location>
        <position position="95"/>
    </location>
</feature>
<protein>
    <recommendedName>
        <fullName evidence="1">Peptidyl-tRNA hydrolase</fullName>
        <shortName evidence="1">Pth</shortName>
        <ecNumber evidence="1">3.1.1.29</ecNumber>
    </recommendedName>
</protein>